<feature type="chain" id="PRO_0000068508" description="Uncharacterized 18.9 kDa protein in mobE 3'region">
    <location>
        <begin position="1"/>
        <end position="170"/>
    </location>
</feature>
<keyword id="KW-0614">Plasmid</keyword>
<protein>
    <recommendedName>
        <fullName>Uncharacterized 18.9 kDa protein in mobE 3'region</fullName>
    </recommendedName>
    <alternativeName>
        <fullName>ORF 3</fullName>
    </alternativeName>
</protein>
<geneLocation type="plasmid">
    <name>pTF-FC2</name>
</geneLocation>
<proteinExistence type="predicted"/>
<organism>
    <name type="scientific">Acidithiobacillus ferrooxidans</name>
    <name type="common">Thiobacillus ferrooxidans</name>
    <dbReference type="NCBI Taxonomy" id="920"/>
    <lineage>
        <taxon>Bacteria</taxon>
        <taxon>Pseudomonadati</taxon>
        <taxon>Pseudomonadota</taxon>
        <taxon>Acidithiobacillia</taxon>
        <taxon>Acidithiobacillales</taxon>
        <taxon>Acidithiobacillaceae</taxon>
        <taxon>Acidithiobacillus</taxon>
    </lineage>
</organism>
<dbReference type="EMBL" id="M57717">
    <property type="protein sequence ID" value="AAA27393.1"/>
    <property type="molecule type" value="Genomic_DNA"/>
</dbReference>
<dbReference type="PIR" id="F43256">
    <property type="entry name" value="F43256"/>
</dbReference>
<reference key="1">
    <citation type="journal article" date="1992" name="J. Bacteriol.">
        <title>Sequence analysis and characterization of the mobilization region of a broad-host-range plasmid, pTF-FC2, isolated from Thiobacillus ferrooxidans.</title>
        <authorList>
            <person name="Rohrer J."/>
            <person name="Rawlings D.E."/>
        </authorList>
    </citation>
    <scope>NUCLEOTIDE SEQUENCE [GENOMIC DNA]</scope>
</reference>
<name>YME1_ACIFR</name>
<sequence>MGVAMIDALNIATMPIADKVHRHMLASYYALQLDALQAEAKRLGYFFAQADTAATMPPVLADCLAWAVEYRRRCYLYPNCPESWERHTADSMSDGYAQEHCRSMLAALAALGIRLQEGQQAYALLAAEECRQREKASLPPEPSPLSEVEVSSFVDEFFTKLDAPKEEVPT</sequence>
<accession>P22902</accession>